<feature type="initiator methionine" description="Removed" evidence="7 8">
    <location>
        <position position="1"/>
    </location>
</feature>
<feature type="chain" id="PRO_0000200275" description="5-formyltetrahydrofolate cyclo-ligase">
    <location>
        <begin position="2"/>
        <end position="203"/>
    </location>
</feature>
<feature type="binding site">
    <location>
        <begin position="10"/>
        <end position="14"/>
    </location>
    <ligand>
        <name>ATP</name>
        <dbReference type="ChEBI" id="CHEBI:30616"/>
    </ligand>
</feature>
<feature type="binding site">
    <location>
        <position position="14"/>
    </location>
    <ligand>
        <name>ATP</name>
        <dbReference type="ChEBI" id="CHEBI:30616"/>
    </ligand>
</feature>
<feature type="binding site">
    <location>
        <position position="56"/>
    </location>
    <ligand>
        <name>substrate</name>
    </ligand>
</feature>
<feature type="binding site">
    <location>
        <position position="61"/>
    </location>
    <ligand>
        <name>substrate</name>
    </ligand>
</feature>
<feature type="binding site">
    <location>
        <begin position="145"/>
        <end position="153"/>
    </location>
    <ligand>
        <name>ATP</name>
        <dbReference type="ChEBI" id="CHEBI:30616"/>
    </ligand>
</feature>
<feature type="binding site">
    <location>
        <begin position="148"/>
        <end position="152"/>
    </location>
    <ligand>
        <name>substrate</name>
    </ligand>
</feature>
<feature type="binding site" evidence="1">
    <location>
        <position position="154"/>
    </location>
    <ligand>
        <name>Mg(2+)</name>
        <dbReference type="ChEBI" id="CHEBI:18420"/>
    </ligand>
</feature>
<feature type="binding site" evidence="1">
    <location>
        <position position="189"/>
    </location>
    <ligand>
        <name>Mg(2+)</name>
        <dbReference type="ChEBI" id="CHEBI:18420"/>
    </ligand>
</feature>
<feature type="modified residue" description="N-acetylalanine" evidence="7 8">
    <location>
        <position position="2"/>
    </location>
</feature>
<feature type="splice variant" id="VSP_046863" description="In isoform 2." evidence="5">
    <original>MAAAAVSSAKRSLRGELKQRLRAMSAEERLRQSRVLSQK</original>
    <variation>MARSRLTATSVSQVQ</variation>
    <location>
        <begin position="1"/>
        <end position="39"/>
    </location>
</feature>
<feature type="sequence variant" id="VAR_082088" description="In NEDMEHM; dbSNP:rs1349638340." evidence="3">
    <original>L</original>
    <variation>P</variation>
    <location>
        <position position="36"/>
    </location>
</feature>
<feature type="sequence variant" id="VAR_082089" description="In NEDMEHM; dbSNP:rs753635972." evidence="3">
    <original>R</original>
    <variation>Q</variation>
    <location>
        <position position="145"/>
    </location>
</feature>
<feature type="sequence variant" id="VAR_082090" description="In NEDMEHM." evidence="3">
    <location>
        <begin position="162"/>
        <end position="203"/>
    </location>
</feature>
<feature type="sequence variant" id="VAR_034115" description="In dbSNP:rs8923.">
    <original>T</original>
    <variation>A</variation>
    <location>
        <position position="202"/>
    </location>
</feature>
<feature type="mutagenesis site" description="Reduces activity by 93%." evidence="2">
    <original>K</original>
    <variation>A</variation>
    <location>
        <position position="10"/>
    </location>
</feature>
<feature type="mutagenesis site" description="Reduces activity by 87%." evidence="2">
    <original>R</original>
    <variation>A</variation>
    <location>
        <position position="14"/>
    </location>
</feature>
<feature type="mutagenesis site" description="Reduces activity by 94%.">
    <original>E</original>
    <variation>A</variation>
    <location>
        <position position="61"/>
    </location>
</feature>
<feature type="mutagenesis site" description="Reduces activity by 98%." evidence="2">
    <original>R</original>
    <variation>A</variation>
    <location>
        <position position="145"/>
    </location>
</feature>
<feature type="mutagenesis site" description="Reduces activity by 97%." evidence="2">
    <original>Y</original>
    <variation>A</variation>
    <location>
        <position position="153"/>
    </location>
</feature>
<feature type="mutagenesis site" description="Reduces activity by 99%." evidence="2">
    <original>D</original>
    <variation>A</variation>
    <location>
        <position position="154"/>
    </location>
</feature>
<feature type="sequence conflict" description="In Ref. 3; CK002935." evidence="6" ref="3">
    <original>E</original>
    <variation>D</variation>
    <location>
        <position position="177"/>
    </location>
</feature>
<feature type="sequence conflict" description="In Ref. 3; CK002935." evidence="6" ref="3">
    <original>A</original>
    <variation>T</variation>
    <location>
        <position position="203"/>
    </location>
</feature>
<feature type="helix" evidence="10">
    <location>
        <begin position="2"/>
        <end position="22"/>
    </location>
</feature>
<feature type="helix" evidence="10">
    <location>
        <begin position="26"/>
        <end position="41"/>
    </location>
</feature>
<feature type="helix" evidence="10">
    <location>
        <begin position="44"/>
        <end position="48"/>
    </location>
</feature>
<feature type="strand" evidence="10">
    <location>
        <begin position="50"/>
        <end position="53"/>
    </location>
</feature>
<feature type="helix" evidence="10">
    <location>
        <begin position="65"/>
        <end position="73"/>
    </location>
</feature>
<feature type="strand" evidence="10">
    <location>
        <begin position="77"/>
        <end position="84"/>
    </location>
</feature>
<feature type="turn" evidence="10">
    <location>
        <begin position="85"/>
        <end position="88"/>
    </location>
</feature>
<feature type="strand" evidence="10">
    <location>
        <begin position="89"/>
        <end position="95"/>
    </location>
</feature>
<feature type="helix" evidence="10">
    <location>
        <begin position="98"/>
        <end position="101"/>
    </location>
</feature>
<feature type="helix" evidence="10">
    <location>
        <begin position="123"/>
        <end position="125"/>
    </location>
</feature>
<feature type="strand" evidence="10">
    <location>
        <begin position="130"/>
        <end position="134"/>
    </location>
</feature>
<feature type="strand" evidence="10">
    <location>
        <begin position="137"/>
        <end position="139"/>
    </location>
</feature>
<feature type="strand" evidence="10">
    <location>
        <begin position="148"/>
        <end position="150"/>
    </location>
</feature>
<feature type="helix" evidence="10">
    <location>
        <begin position="152"/>
        <end position="160"/>
    </location>
</feature>
<feature type="turn" evidence="10">
    <location>
        <begin position="161"/>
        <end position="163"/>
    </location>
</feature>
<feature type="strand" evidence="10">
    <location>
        <begin position="169"/>
        <end position="173"/>
    </location>
</feature>
<feature type="helix" evidence="10">
    <location>
        <begin position="176"/>
        <end position="178"/>
    </location>
</feature>
<feature type="strand" evidence="9">
    <location>
        <begin position="179"/>
        <end position="181"/>
    </location>
</feature>
<feature type="strand" evidence="10">
    <location>
        <begin position="193"/>
        <end position="196"/>
    </location>
</feature>
<organism>
    <name type="scientific">Homo sapiens</name>
    <name type="common">Human</name>
    <dbReference type="NCBI Taxonomy" id="9606"/>
    <lineage>
        <taxon>Eukaryota</taxon>
        <taxon>Metazoa</taxon>
        <taxon>Chordata</taxon>
        <taxon>Craniata</taxon>
        <taxon>Vertebrata</taxon>
        <taxon>Euteleostomi</taxon>
        <taxon>Mammalia</taxon>
        <taxon>Eutheria</taxon>
        <taxon>Euarchontoglires</taxon>
        <taxon>Primates</taxon>
        <taxon>Haplorrhini</taxon>
        <taxon>Catarrhini</taxon>
        <taxon>Hominidae</taxon>
        <taxon>Homo</taxon>
    </lineage>
</organism>
<proteinExistence type="evidence at protein level"/>
<comment type="function">
    <text evidence="4">Contributes to tetrahydrofolate metabolism. Helps regulate carbon flow through the folate-dependent one-carbon metabolic network that supplies carbon for the biosynthesis of purines, thymidine and amino acids. Catalyzes the irreversible conversion of 5-formyltetrahydrofolate (5-FTHF) to yield 5,10-methenyltetrahydrofolate.</text>
</comment>
<comment type="catalytic activity">
    <reaction evidence="4">
        <text>(6S)-5-formyl-5,6,7,8-tetrahydrofolate + ATP = (6R)-5,10-methenyltetrahydrofolate + ADP + phosphate</text>
        <dbReference type="Rhea" id="RHEA:10488"/>
        <dbReference type="ChEBI" id="CHEBI:30616"/>
        <dbReference type="ChEBI" id="CHEBI:43474"/>
        <dbReference type="ChEBI" id="CHEBI:57455"/>
        <dbReference type="ChEBI" id="CHEBI:57457"/>
        <dbReference type="ChEBI" id="CHEBI:456216"/>
        <dbReference type="EC" id="6.3.3.2"/>
    </reaction>
</comment>
<comment type="cofactor">
    <cofactor>
        <name>Mg(2+)</name>
        <dbReference type="ChEBI" id="CHEBI:18420"/>
    </cofactor>
</comment>
<comment type="subunit">
    <text>Monomer.</text>
</comment>
<comment type="interaction">
    <interactant intactId="EBI-751720">
        <id>P49914</id>
    </interactant>
    <interactant intactId="EBI-311059">
        <id>Q9UPR0</id>
        <label>PLCL2</label>
    </interactant>
    <organismsDiffer>false</organismsDiffer>
    <experiments>2</experiments>
</comment>
<comment type="subcellular location">
    <subcellularLocation>
        <location>Cytoplasm</location>
    </subcellularLocation>
</comment>
<comment type="alternative products">
    <event type="alternative splicing"/>
    <isoform>
        <id>P49914-1</id>
        <name>1</name>
        <sequence type="displayed"/>
    </isoform>
    <isoform>
        <id>P49914-2</id>
        <name>2</name>
        <sequence type="described" ref="VSP_046863"/>
    </isoform>
</comment>
<comment type="disease" evidence="3">
    <disease id="DI-05514">
        <name>Neurodevelopmental disorder with microcephaly, epilepsy, and hypomyelination</name>
        <acronym>NEDMEHM</acronym>
        <description>An autosomal recessive neurodevelopmental disorder with onset at birth or in early infancy, and characterized by microcephaly, short stature, severe global developmental delay, progressive spasticity, and epilepsy. Brain imaging shows delayed myelination, hypomyelination, enlarged ventricles, and cerebellar atrophy.</description>
        <dbReference type="MIM" id="618367"/>
    </disease>
    <text>The disease is caused by variants affecting the gene represented in this entry.</text>
</comment>
<comment type="similarity">
    <text evidence="6">Belongs to the 5-formyltetrahydrofolate cyclo-ligase family.</text>
</comment>
<comment type="sequence caution" evidence="6">
    <conflict type="frameshift">
        <sequence resource="EMBL" id="CK002935"/>
    </conflict>
</comment>
<accession>P49914</accession>
<accession>H3BQ75</accession>
<name>MTHFS_HUMAN</name>
<dbReference type="EC" id="6.3.3.2"/>
<dbReference type="EMBL" id="L38928">
    <property type="protein sequence ID" value="AAC41945.1"/>
    <property type="molecule type" value="mRNA"/>
</dbReference>
<dbReference type="EMBL" id="AC015871">
    <property type="status" value="NOT_ANNOTATED_CDS"/>
    <property type="molecule type" value="Genomic_DNA"/>
</dbReference>
<dbReference type="EMBL" id="AC021483">
    <property type="status" value="NOT_ANNOTATED_CDS"/>
    <property type="molecule type" value="Genomic_DNA"/>
</dbReference>
<dbReference type="EMBL" id="BC019921">
    <property type="protein sequence ID" value="AAH19921.1"/>
    <property type="molecule type" value="mRNA"/>
</dbReference>
<dbReference type="EMBL" id="CK002935">
    <property type="status" value="NOT_ANNOTATED_CDS"/>
    <property type="molecule type" value="mRNA"/>
</dbReference>
<dbReference type="CCDS" id="CCDS10311.1">
    <molecule id="P49914-1"/>
</dbReference>
<dbReference type="PIR" id="JC4389">
    <property type="entry name" value="JC4389"/>
</dbReference>
<dbReference type="RefSeq" id="NP_001186687.1">
    <property type="nucleotide sequence ID" value="NM_001199758.1"/>
</dbReference>
<dbReference type="RefSeq" id="NP_006432.1">
    <molecule id="P49914-1"/>
    <property type="nucleotide sequence ID" value="NM_006441.4"/>
</dbReference>
<dbReference type="PDB" id="3HXT">
    <property type="method" value="X-ray"/>
    <property type="resolution" value="1.90 A"/>
    <property type="chains" value="A=1-203"/>
</dbReference>
<dbReference type="PDB" id="3HY3">
    <property type="method" value="X-ray"/>
    <property type="resolution" value="1.80 A"/>
    <property type="chains" value="A=1-203"/>
</dbReference>
<dbReference type="PDB" id="3HY4">
    <property type="method" value="X-ray"/>
    <property type="resolution" value="2.80 A"/>
    <property type="chains" value="A=1-203"/>
</dbReference>
<dbReference type="PDB" id="3HY6">
    <property type="method" value="X-ray"/>
    <property type="resolution" value="2.10 A"/>
    <property type="chains" value="A=1-203"/>
</dbReference>
<dbReference type="PDBsum" id="3HXT"/>
<dbReference type="PDBsum" id="3HY3"/>
<dbReference type="PDBsum" id="3HY4"/>
<dbReference type="PDBsum" id="3HY6"/>
<dbReference type="BMRB" id="P49914"/>
<dbReference type="SMR" id="P49914"/>
<dbReference type="BioGRID" id="115837">
    <property type="interactions" value="15"/>
</dbReference>
<dbReference type="FunCoup" id="P49914">
    <property type="interactions" value="1183"/>
</dbReference>
<dbReference type="IntAct" id="P49914">
    <property type="interactions" value="6"/>
</dbReference>
<dbReference type="STRING" id="9606.ENSP00000258874"/>
<dbReference type="iPTMnet" id="P49914"/>
<dbReference type="PhosphoSitePlus" id="P49914"/>
<dbReference type="SwissPalm" id="P49914"/>
<dbReference type="BioMuta" id="MTHFS"/>
<dbReference type="jPOST" id="P49914"/>
<dbReference type="MassIVE" id="P49914"/>
<dbReference type="PaxDb" id="9606-ENSP00000258874"/>
<dbReference type="PeptideAtlas" id="P49914"/>
<dbReference type="ProteomicsDB" id="41708"/>
<dbReference type="ProteomicsDB" id="56179">
    <molecule id="P49914-1"/>
</dbReference>
<dbReference type="Pumba" id="P49914"/>
<dbReference type="Antibodypedia" id="1955">
    <property type="antibodies" value="220 antibodies from 27 providers"/>
</dbReference>
<dbReference type="DNASU" id="10588"/>
<dbReference type="Ensembl" id="ENST00000258874.4">
    <molecule id="P49914-1"/>
    <property type="protein sequence ID" value="ENSP00000258874.4"/>
    <property type="gene ID" value="ENSG00000136371.11"/>
</dbReference>
<dbReference type="GeneID" id="10588"/>
<dbReference type="KEGG" id="hsa:10588"/>
<dbReference type="MANE-Select" id="ENST00000258874.4">
    <property type="protein sequence ID" value="ENSP00000258874.4"/>
    <property type="RefSeq nucleotide sequence ID" value="NM_006441.4"/>
    <property type="RefSeq protein sequence ID" value="NP_006432.1"/>
</dbReference>
<dbReference type="UCSC" id="uc002bex.5">
    <molecule id="P49914-1"/>
    <property type="organism name" value="human"/>
</dbReference>
<dbReference type="AGR" id="HGNC:7437"/>
<dbReference type="CTD" id="10588"/>
<dbReference type="DisGeNET" id="10588"/>
<dbReference type="GeneCards" id="MTHFS"/>
<dbReference type="HGNC" id="HGNC:7437">
    <property type="gene designation" value="MTHFS"/>
</dbReference>
<dbReference type="HPA" id="ENSG00000136371">
    <property type="expression patterns" value="Tissue enriched (liver)"/>
</dbReference>
<dbReference type="MalaCards" id="MTHFS"/>
<dbReference type="MIM" id="604197">
    <property type="type" value="gene"/>
</dbReference>
<dbReference type="MIM" id="618367">
    <property type="type" value="phenotype"/>
</dbReference>
<dbReference type="neXtProt" id="NX_P49914"/>
<dbReference type="OpenTargets" id="ENSG00000136371"/>
<dbReference type="OpenTargets" id="ENSG00000259332"/>
<dbReference type="Orphanet" id="597874">
    <property type="disease" value="MTHFS-related developmental delay-microcephaly-short stature-epilepsy syndrome"/>
</dbReference>
<dbReference type="PharmGKB" id="PA31239"/>
<dbReference type="VEuPathDB" id="HostDB:ENSG00000136371"/>
<dbReference type="eggNOG" id="KOG3093">
    <property type="taxonomic scope" value="Eukaryota"/>
</dbReference>
<dbReference type="GeneTree" id="ENSGT00390000017791"/>
<dbReference type="HOGENOM" id="CLU_066245_2_1_1"/>
<dbReference type="InParanoid" id="P49914"/>
<dbReference type="OMA" id="STIYPCQ"/>
<dbReference type="OrthoDB" id="2015992at2759"/>
<dbReference type="PAN-GO" id="P49914">
    <property type="GO annotations" value="4 GO annotations based on evolutionary models"/>
</dbReference>
<dbReference type="PhylomeDB" id="P49914"/>
<dbReference type="TreeFam" id="TF313668"/>
<dbReference type="BRENDA" id="6.3.3.2">
    <property type="organism ID" value="2681"/>
</dbReference>
<dbReference type="PathwayCommons" id="P49914"/>
<dbReference type="Reactome" id="R-HSA-196757">
    <property type="pathway name" value="Metabolism of folate and pterines"/>
</dbReference>
<dbReference type="SignaLink" id="P49914"/>
<dbReference type="BioGRID-ORCS" id="10588">
    <property type="hits" value="10 hits in 1143 CRISPR screens"/>
</dbReference>
<dbReference type="EvolutionaryTrace" id="P49914"/>
<dbReference type="GenomeRNAi" id="10588"/>
<dbReference type="Pharos" id="P49914">
    <property type="development level" value="Tbio"/>
</dbReference>
<dbReference type="PRO" id="PR:P49914"/>
<dbReference type="Proteomes" id="UP000005640">
    <property type="component" value="Chromosome 15"/>
</dbReference>
<dbReference type="RNAct" id="P49914">
    <property type="molecule type" value="protein"/>
</dbReference>
<dbReference type="Bgee" id="ENSG00000136371">
    <property type="expression patterns" value="Expressed in right lobe of liver and 103 other cell types or tissues"/>
</dbReference>
<dbReference type="ExpressionAtlas" id="P49914">
    <property type="expression patterns" value="baseline and differential"/>
</dbReference>
<dbReference type="GO" id="GO:0005737">
    <property type="term" value="C:cytoplasm"/>
    <property type="evidence" value="ECO:0000314"/>
    <property type="project" value="BHF-UCL"/>
</dbReference>
<dbReference type="GO" id="GO:0005829">
    <property type="term" value="C:cytosol"/>
    <property type="evidence" value="ECO:0000314"/>
    <property type="project" value="HPA"/>
</dbReference>
<dbReference type="GO" id="GO:0005759">
    <property type="term" value="C:mitochondrial matrix"/>
    <property type="evidence" value="ECO:0000314"/>
    <property type="project" value="BHF-UCL"/>
</dbReference>
<dbReference type="GO" id="GO:0005739">
    <property type="term" value="C:mitochondrion"/>
    <property type="evidence" value="ECO:0006056"/>
    <property type="project" value="FlyBase"/>
</dbReference>
<dbReference type="GO" id="GO:0030272">
    <property type="term" value="F:5-formyltetrahydrofolate cyclo-ligase activity"/>
    <property type="evidence" value="ECO:0000314"/>
    <property type="project" value="UniProtKB"/>
</dbReference>
<dbReference type="GO" id="GO:0005524">
    <property type="term" value="F:ATP binding"/>
    <property type="evidence" value="ECO:0000314"/>
    <property type="project" value="BHF-UCL"/>
</dbReference>
<dbReference type="GO" id="GO:0005542">
    <property type="term" value="F:folic acid binding"/>
    <property type="evidence" value="ECO:0000314"/>
    <property type="project" value="BHF-UCL"/>
</dbReference>
<dbReference type="GO" id="GO:0046872">
    <property type="term" value="F:metal ion binding"/>
    <property type="evidence" value="ECO:0007669"/>
    <property type="project" value="UniProtKB-KW"/>
</dbReference>
<dbReference type="GO" id="GO:0046657">
    <property type="term" value="P:folic acid catabolic process"/>
    <property type="evidence" value="ECO:0000315"/>
    <property type="project" value="BHF-UCL"/>
</dbReference>
<dbReference type="GO" id="GO:0046655">
    <property type="term" value="P:folic acid metabolic process"/>
    <property type="evidence" value="ECO:0000304"/>
    <property type="project" value="Reactome"/>
</dbReference>
<dbReference type="GO" id="GO:0009396">
    <property type="term" value="P:folic acid-containing compound biosynthetic process"/>
    <property type="evidence" value="ECO:0000318"/>
    <property type="project" value="GO_Central"/>
</dbReference>
<dbReference type="GO" id="GO:0015942">
    <property type="term" value="P:formate metabolic process"/>
    <property type="evidence" value="ECO:0000303"/>
    <property type="project" value="UniProtKB"/>
</dbReference>
<dbReference type="GO" id="GO:0006536">
    <property type="term" value="P:glutamate metabolic process"/>
    <property type="evidence" value="ECO:0000315"/>
    <property type="project" value="BHF-UCL"/>
</dbReference>
<dbReference type="GO" id="GO:0035999">
    <property type="term" value="P:tetrahydrofolate interconversion"/>
    <property type="evidence" value="ECO:0000315"/>
    <property type="project" value="BHF-UCL"/>
</dbReference>
<dbReference type="GO" id="GO:0046653">
    <property type="term" value="P:tetrahydrofolate metabolic process"/>
    <property type="evidence" value="ECO:0000314"/>
    <property type="project" value="UniProtKB"/>
</dbReference>
<dbReference type="FunFam" id="3.40.50.10420:FF:000002">
    <property type="entry name" value="5-formyltetrahydrofolate cyclo-ligase"/>
    <property type="match status" value="1"/>
</dbReference>
<dbReference type="Gene3D" id="3.40.50.10420">
    <property type="entry name" value="NagB/RpiA/CoA transferase-like"/>
    <property type="match status" value="1"/>
</dbReference>
<dbReference type="InterPro" id="IPR002698">
    <property type="entry name" value="FTHF_cligase"/>
</dbReference>
<dbReference type="InterPro" id="IPR024185">
    <property type="entry name" value="FTHF_cligase-like_sf"/>
</dbReference>
<dbReference type="InterPro" id="IPR037171">
    <property type="entry name" value="NagB/RpiA_transferase-like"/>
</dbReference>
<dbReference type="NCBIfam" id="TIGR02727">
    <property type="entry name" value="MTHFS_bact"/>
    <property type="match status" value="1"/>
</dbReference>
<dbReference type="PANTHER" id="PTHR23407:SF1">
    <property type="entry name" value="5-FORMYLTETRAHYDROFOLATE CYCLO-LIGASE"/>
    <property type="match status" value="1"/>
</dbReference>
<dbReference type="PANTHER" id="PTHR23407">
    <property type="entry name" value="ATPASE INHIBITOR/5-FORMYLTETRAHYDROFOLATE CYCLO-LIGASE"/>
    <property type="match status" value="1"/>
</dbReference>
<dbReference type="Pfam" id="PF01812">
    <property type="entry name" value="5-FTHF_cyc-lig"/>
    <property type="match status" value="1"/>
</dbReference>
<dbReference type="PIRSF" id="PIRSF006806">
    <property type="entry name" value="FTHF_cligase"/>
    <property type="match status" value="1"/>
</dbReference>
<dbReference type="SUPFAM" id="SSF100950">
    <property type="entry name" value="NagB/RpiA/CoA transferase-like"/>
    <property type="match status" value="1"/>
</dbReference>
<sequence>MAAAAVSSAKRSLRGELKQRLRAMSAEERLRQSRVLSQKVIAHSEYQKSKRISIFLSMQDEIETEEIIKDIFQRGKICFIPRYRFQSNHMDMVRIESPEEISLLPKTSWNIPQPGEGDVREEALSTGGLDLIFMPGLGFDKHGNRLGRGKGYYDAYLKRCLQHQEVKPYTLALAFKEQICLQVPVNENDMKVDEVLYEDSSTA</sequence>
<evidence type="ECO:0000250" key="1"/>
<evidence type="ECO:0000269" key="2">
    <source>
    </source>
</evidence>
<evidence type="ECO:0000269" key="3">
    <source>
    </source>
</evidence>
<evidence type="ECO:0000269" key="4">
    <source>
    </source>
</evidence>
<evidence type="ECO:0000303" key="5">
    <source>
    </source>
</evidence>
<evidence type="ECO:0000305" key="6"/>
<evidence type="ECO:0007744" key="7">
    <source>
    </source>
</evidence>
<evidence type="ECO:0007744" key="8">
    <source>
    </source>
</evidence>
<evidence type="ECO:0007829" key="9">
    <source>
        <dbReference type="PDB" id="3HXT"/>
    </source>
</evidence>
<evidence type="ECO:0007829" key="10">
    <source>
        <dbReference type="PDB" id="3HY3"/>
    </source>
</evidence>
<keyword id="KW-0002">3D-structure</keyword>
<keyword id="KW-0007">Acetylation</keyword>
<keyword id="KW-0025">Alternative splicing</keyword>
<keyword id="KW-0067">ATP-binding</keyword>
<keyword id="KW-0963">Cytoplasm</keyword>
<keyword id="KW-0225">Disease variant</keyword>
<keyword id="KW-0887">Epilepsy</keyword>
<keyword id="KW-0290">Folate-binding</keyword>
<keyword id="KW-0436">Ligase</keyword>
<keyword id="KW-0460">Magnesium</keyword>
<keyword id="KW-0479">Metal-binding</keyword>
<keyword id="KW-0547">Nucleotide-binding</keyword>
<keyword id="KW-1267">Proteomics identification</keyword>
<keyword id="KW-1185">Reference proteome</keyword>
<reference key="1">
    <citation type="journal article" date="1995" name="Gene">
        <title>Cloning and characterization of the human 5,10-methenyltetrahydrofolate synthetase-encoding cDNA.</title>
        <authorList>
            <person name="Dayan A."/>
            <person name="Bertrand R."/>
            <person name="Beauchemin M."/>
            <person name="Chahla D."/>
            <person name="Mamo A."/>
            <person name="Filion M."/>
            <person name="Skup D."/>
            <person name="Massie B."/>
            <person name="Jolivet J."/>
        </authorList>
    </citation>
    <scope>NUCLEOTIDE SEQUENCE [MRNA] (ISOFORM 1)</scope>
    <scope>FUNCTION</scope>
    <scope>CATALYTIC ACTIVITY</scope>
    <source>
        <tissue>Liver</tissue>
    </source>
</reference>
<reference key="2">
    <citation type="journal article" date="2006" name="Nature">
        <title>Analysis of the DNA sequence and duplication history of human chromosome 15.</title>
        <authorList>
            <person name="Zody M.C."/>
            <person name="Garber M."/>
            <person name="Sharpe T."/>
            <person name="Young S.K."/>
            <person name="Rowen L."/>
            <person name="O'Neill K."/>
            <person name="Whittaker C.A."/>
            <person name="Kamal M."/>
            <person name="Chang J.L."/>
            <person name="Cuomo C.A."/>
            <person name="Dewar K."/>
            <person name="FitzGerald M.G."/>
            <person name="Kodira C.D."/>
            <person name="Madan A."/>
            <person name="Qin S."/>
            <person name="Yang X."/>
            <person name="Abbasi N."/>
            <person name="Abouelleil A."/>
            <person name="Arachchi H.M."/>
            <person name="Baradarani L."/>
            <person name="Birditt B."/>
            <person name="Bloom S."/>
            <person name="Bloom T."/>
            <person name="Borowsky M.L."/>
            <person name="Burke J."/>
            <person name="Butler J."/>
            <person name="Cook A."/>
            <person name="DeArellano K."/>
            <person name="DeCaprio D."/>
            <person name="Dorris L. III"/>
            <person name="Dors M."/>
            <person name="Eichler E.E."/>
            <person name="Engels R."/>
            <person name="Fahey J."/>
            <person name="Fleetwood P."/>
            <person name="Friedman C."/>
            <person name="Gearin G."/>
            <person name="Hall J.L."/>
            <person name="Hensley G."/>
            <person name="Johnson E."/>
            <person name="Jones C."/>
            <person name="Kamat A."/>
            <person name="Kaur A."/>
            <person name="Locke D.P."/>
            <person name="Madan A."/>
            <person name="Munson G."/>
            <person name="Jaffe D.B."/>
            <person name="Lui A."/>
            <person name="Macdonald P."/>
            <person name="Mauceli E."/>
            <person name="Naylor J.W."/>
            <person name="Nesbitt R."/>
            <person name="Nicol R."/>
            <person name="O'Leary S.B."/>
            <person name="Ratcliffe A."/>
            <person name="Rounsley S."/>
            <person name="She X."/>
            <person name="Sneddon K.M.B."/>
            <person name="Stewart S."/>
            <person name="Sougnez C."/>
            <person name="Stone S.M."/>
            <person name="Topham K."/>
            <person name="Vincent D."/>
            <person name="Wang S."/>
            <person name="Zimmer A.R."/>
            <person name="Birren B.W."/>
            <person name="Hood L."/>
            <person name="Lander E.S."/>
            <person name="Nusbaum C."/>
        </authorList>
    </citation>
    <scope>NUCLEOTIDE SEQUENCE [LARGE SCALE GENOMIC DNA]</scope>
</reference>
<reference key="3">
    <citation type="journal article" date="2004" name="Genome Res.">
        <title>The status, quality, and expansion of the NIH full-length cDNA project: the Mammalian Gene Collection (MGC).</title>
        <authorList>
            <consortium name="The MGC Project Team"/>
        </authorList>
    </citation>
    <scope>NUCLEOTIDE SEQUENCE [LARGE SCALE MRNA] (ISOFORMS 1 AND 2)</scope>
    <source>
        <tissue>Brain cortex</tissue>
        <tissue>Pancreas</tissue>
    </source>
</reference>
<reference key="4">
    <citation type="journal article" date="1987" name="Biochim. Biophys. Acta">
        <title>Human liver methenyltetrahydrofolate synthetase: improved purification and increased affinity for folate polyglutamate substrates.</title>
        <authorList>
            <person name="Bertrand R."/>
            <person name="MacKenzie R.E."/>
            <person name="Jolivet J."/>
        </authorList>
    </citation>
    <scope>CHARACTERIZATION</scope>
</reference>
<reference key="5">
    <citation type="journal article" date="2009" name="Anal. Chem.">
        <title>Lys-N and trypsin cover complementary parts of the phosphoproteome in a refined SCX-based approach.</title>
        <authorList>
            <person name="Gauci S."/>
            <person name="Helbig A.O."/>
            <person name="Slijper M."/>
            <person name="Krijgsveld J."/>
            <person name="Heck A.J."/>
            <person name="Mohammed S."/>
        </authorList>
    </citation>
    <scope>ACETYLATION [LARGE SCALE ANALYSIS] AT ALA-2</scope>
    <scope>CLEAVAGE OF INITIATOR METHIONINE [LARGE SCALE ANALYSIS]</scope>
    <scope>IDENTIFICATION BY MASS SPECTROMETRY [LARGE SCALE ANALYSIS]</scope>
</reference>
<reference key="6">
    <citation type="journal article" date="2012" name="Proc. Natl. Acad. Sci. U.S.A.">
        <title>N-terminal acetylome analyses and functional insights of the N-terminal acetyltransferase NatB.</title>
        <authorList>
            <person name="Van Damme P."/>
            <person name="Lasa M."/>
            <person name="Polevoda B."/>
            <person name="Gazquez C."/>
            <person name="Elosegui-Artola A."/>
            <person name="Kim D.S."/>
            <person name="De Juan-Pardo E."/>
            <person name="Demeyer K."/>
            <person name="Hole K."/>
            <person name="Larrea E."/>
            <person name="Timmerman E."/>
            <person name="Prieto J."/>
            <person name="Arnesen T."/>
            <person name="Sherman F."/>
            <person name="Gevaert K."/>
            <person name="Aldabe R."/>
        </authorList>
    </citation>
    <scope>ACETYLATION [LARGE SCALE ANALYSIS] AT ALA-2</scope>
    <scope>CLEAVAGE OF INITIATOR METHIONINE [LARGE SCALE ANALYSIS]</scope>
    <scope>IDENTIFICATION BY MASS SPECTROMETRY [LARGE SCALE ANALYSIS]</scope>
</reference>
<reference key="7">
    <citation type="journal article" date="2018" name="Mol. Genet. Metab.">
        <title>5,10-methenyltetrahydrofolate synthetase deficiency causes a neurometabolic disorder associated with microcephaly, epilepsy, and cerebral hypomyelination.</title>
        <authorList>
            <consortium name="Undiagnosed Diseases Network (UDN)"/>
            <person name="Rodan L.H."/>
            <person name="Qi W."/>
            <person name="Ducker G.S."/>
            <person name="Demirbas D."/>
            <person name="Laine R."/>
            <person name="Yang E."/>
            <person name="Walker M.A."/>
            <person name="Eichler F."/>
            <person name="Rabinowitz J.D."/>
            <person name="Anselm I."/>
            <person name="Berry G.T."/>
        </authorList>
    </citation>
    <scope>INVOLVEMENT IN NEDMEHM</scope>
    <scope>VARIANTS NEDMEHM PRO-36; GLN-145 AND 162-GLN--ALA-203 DEL</scope>
</reference>
<reference key="8">
    <citation type="journal article" date="2009" name="Cancer Res.">
        <title>Structural basis for the inhibition of human 5,10-methenyltetrahydrofolate synthetase by N10-substituted folate analogues.</title>
        <authorList>
            <person name="Wu D."/>
            <person name="Li Y."/>
            <person name="Song G."/>
            <person name="Cheng C."/>
            <person name="Zhang R."/>
            <person name="Joachimiak A."/>
            <person name="Shaw N."/>
            <person name="Liu Z.-J."/>
        </authorList>
    </citation>
    <scope>X-RAY CRYSTALLOGRAPHY (1.8 ANGSTROMS) IN COMPLEXES WITH SUBSTRATE; PRODUCT; ADP AND MAGNESIUM IONS</scope>
    <scope>MUTAGENESIS OF LYS-10; ARG-14; ARG-145; TYR-153 AND ASP-154</scope>
</reference>
<gene>
    <name type="primary">MTHFS</name>
</gene>
<protein>
    <recommendedName>
        <fullName>5-formyltetrahydrofolate cyclo-ligase</fullName>
        <ecNumber>6.3.3.2</ecNumber>
    </recommendedName>
    <alternativeName>
        <fullName>5,10-methenyl-tetrahydrofolate synthetase</fullName>
        <shortName>MTHFS</shortName>
        <shortName>Methenyl-THF synthetase</shortName>
    </alternativeName>
</protein>